<reference key="1">
    <citation type="journal article" date="2008" name="J. Bacteriol.">
        <title>Genome sequence of Thermofilum pendens reveals an exceptional loss of biosynthetic pathways without genome reduction.</title>
        <authorList>
            <person name="Anderson I."/>
            <person name="Rodriguez J."/>
            <person name="Susanti D."/>
            <person name="Porat I."/>
            <person name="Reich C."/>
            <person name="Ulrich L.E."/>
            <person name="Elkins J.G."/>
            <person name="Mavromatis K."/>
            <person name="Lykidis A."/>
            <person name="Kim E."/>
            <person name="Thompson L.S."/>
            <person name="Nolan M."/>
            <person name="Land M."/>
            <person name="Copeland A."/>
            <person name="Lapidus A."/>
            <person name="Lucas S."/>
            <person name="Detter C."/>
            <person name="Zhulin I.B."/>
            <person name="Olsen G.J."/>
            <person name="Whitman W."/>
            <person name="Mukhopadhyay B."/>
            <person name="Bristow J."/>
            <person name="Kyrpides N."/>
        </authorList>
    </citation>
    <scope>NUCLEOTIDE SEQUENCE [LARGE SCALE GENOMIC DNA]</scope>
    <source>
        <strain>DSM 2475 / Hrk 5</strain>
    </source>
</reference>
<organism>
    <name type="scientific">Thermofilum pendens (strain DSM 2475 / Hrk 5)</name>
    <dbReference type="NCBI Taxonomy" id="368408"/>
    <lineage>
        <taxon>Archaea</taxon>
        <taxon>Thermoproteota</taxon>
        <taxon>Thermoprotei</taxon>
        <taxon>Thermofilales</taxon>
        <taxon>Thermofilaceae</taxon>
        <taxon>Thermofilum</taxon>
    </lineage>
</organism>
<evidence type="ECO:0000255" key="1">
    <source>
        <dbReference type="HAMAP-Rule" id="MF_01367"/>
    </source>
</evidence>
<evidence type="ECO:0000305" key="2"/>
<comment type="function">
    <text evidence="1">Binds to 23S rRNA. Forms part of two intersubunit bridges in the 70S ribosome.</text>
</comment>
<comment type="subunit">
    <text evidence="1">Part of the 50S ribosomal subunit. Forms a cluster with proteins L3 and L24e, part of which may contact the 16S rRNA in 2 intersubunit bridges.</text>
</comment>
<comment type="similarity">
    <text evidence="1">Belongs to the universal ribosomal protein uL14 family.</text>
</comment>
<accession>A1RXG2</accession>
<sequence length="141" mass="15380">MAKRGPKTVGVSYRLGLTPGVFMESLVKVADNSGATLAKVIGVPHYKAVWRRIPGAAVGDIVIVSIRAGKPELRKQVMRAIVIRQRRPYRRPDGSWIAFEDNAVVIITPEGEPKGTEIRGPLAKEAAERWPKLSAMASIIV</sequence>
<gene>
    <name evidence="1" type="primary">rpl14</name>
    <name type="ordered locus">Tpen_0483</name>
</gene>
<protein>
    <recommendedName>
        <fullName evidence="1">Large ribosomal subunit protein uL14</fullName>
    </recommendedName>
    <alternativeName>
        <fullName evidence="2">50S ribosomal protein L14</fullName>
    </alternativeName>
</protein>
<feature type="chain" id="PRO_0000355853" description="Large ribosomal subunit protein uL14">
    <location>
        <begin position="1"/>
        <end position="141"/>
    </location>
</feature>
<keyword id="KW-1185">Reference proteome</keyword>
<keyword id="KW-0687">Ribonucleoprotein</keyword>
<keyword id="KW-0689">Ribosomal protein</keyword>
<keyword id="KW-0694">RNA-binding</keyword>
<keyword id="KW-0699">rRNA-binding</keyword>
<name>RL14_THEPD</name>
<proteinExistence type="inferred from homology"/>
<dbReference type="EMBL" id="CP000505">
    <property type="protein sequence ID" value="ABL77892.1"/>
    <property type="molecule type" value="Genomic_DNA"/>
</dbReference>
<dbReference type="RefSeq" id="WP_011752157.1">
    <property type="nucleotide sequence ID" value="NC_008698.1"/>
</dbReference>
<dbReference type="SMR" id="A1RXG2"/>
<dbReference type="STRING" id="368408.Tpen_0483"/>
<dbReference type="EnsemblBacteria" id="ABL77892">
    <property type="protein sequence ID" value="ABL77892"/>
    <property type="gene ID" value="Tpen_0483"/>
</dbReference>
<dbReference type="GeneID" id="4601878"/>
<dbReference type="KEGG" id="tpe:Tpen_0483"/>
<dbReference type="eggNOG" id="arCOG04095">
    <property type="taxonomic scope" value="Archaea"/>
</dbReference>
<dbReference type="HOGENOM" id="CLU_095071_3_0_2"/>
<dbReference type="OrthoDB" id="23569at2157"/>
<dbReference type="Proteomes" id="UP000000641">
    <property type="component" value="Chromosome"/>
</dbReference>
<dbReference type="GO" id="GO:0022625">
    <property type="term" value="C:cytosolic large ribosomal subunit"/>
    <property type="evidence" value="ECO:0007669"/>
    <property type="project" value="TreeGrafter"/>
</dbReference>
<dbReference type="GO" id="GO:0070180">
    <property type="term" value="F:large ribosomal subunit rRNA binding"/>
    <property type="evidence" value="ECO:0007669"/>
    <property type="project" value="TreeGrafter"/>
</dbReference>
<dbReference type="GO" id="GO:0003735">
    <property type="term" value="F:structural constituent of ribosome"/>
    <property type="evidence" value="ECO:0007669"/>
    <property type="project" value="InterPro"/>
</dbReference>
<dbReference type="GO" id="GO:0006412">
    <property type="term" value="P:translation"/>
    <property type="evidence" value="ECO:0007669"/>
    <property type="project" value="UniProtKB-UniRule"/>
</dbReference>
<dbReference type="CDD" id="cd00337">
    <property type="entry name" value="Ribosomal_uL14"/>
    <property type="match status" value="1"/>
</dbReference>
<dbReference type="FunFam" id="2.40.150.20:FF:000007">
    <property type="entry name" value="50S ribosomal protein L14"/>
    <property type="match status" value="1"/>
</dbReference>
<dbReference type="Gene3D" id="2.40.150.20">
    <property type="entry name" value="Ribosomal protein L14"/>
    <property type="match status" value="1"/>
</dbReference>
<dbReference type="HAMAP" id="MF_01367">
    <property type="entry name" value="Ribosomal_uL14"/>
    <property type="match status" value="1"/>
</dbReference>
<dbReference type="InterPro" id="IPR000218">
    <property type="entry name" value="Ribosomal_uL14"/>
</dbReference>
<dbReference type="InterPro" id="IPR019971">
    <property type="entry name" value="Ribosomal_uL14_arc"/>
</dbReference>
<dbReference type="InterPro" id="IPR019972">
    <property type="entry name" value="Ribosomal_uL14_CS"/>
</dbReference>
<dbReference type="InterPro" id="IPR036853">
    <property type="entry name" value="Ribosomal_uL14_sf"/>
</dbReference>
<dbReference type="NCBIfam" id="NF006344">
    <property type="entry name" value="PRK08571.1"/>
    <property type="match status" value="1"/>
</dbReference>
<dbReference type="NCBIfam" id="TIGR03673">
    <property type="entry name" value="uL14_arch"/>
    <property type="match status" value="1"/>
</dbReference>
<dbReference type="PANTHER" id="PTHR11761">
    <property type="entry name" value="50S/60S RIBOSOMAL PROTEIN L14/L23"/>
    <property type="match status" value="1"/>
</dbReference>
<dbReference type="PANTHER" id="PTHR11761:SF8">
    <property type="entry name" value="LARGE RIBOSOMAL SUBUNIT PROTEIN UL14"/>
    <property type="match status" value="1"/>
</dbReference>
<dbReference type="Pfam" id="PF00238">
    <property type="entry name" value="Ribosomal_L14"/>
    <property type="match status" value="1"/>
</dbReference>
<dbReference type="SMART" id="SM01374">
    <property type="entry name" value="Ribosomal_L14"/>
    <property type="match status" value="1"/>
</dbReference>
<dbReference type="SUPFAM" id="SSF50193">
    <property type="entry name" value="Ribosomal protein L14"/>
    <property type="match status" value="1"/>
</dbReference>
<dbReference type="PROSITE" id="PS00049">
    <property type="entry name" value="RIBOSOMAL_L14"/>
    <property type="match status" value="1"/>
</dbReference>